<proteinExistence type="inferred from homology"/>
<comment type="function">
    <text evidence="1">NDH-1 shuttles electrons from an unknown electron donor, via FMN and iron-sulfur (Fe-S) centers, to quinones in the respiratory and/or the photosynthetic chain. The immediate electron acceptor for the enzyme in this species is believed to be plastoquinone. Couples the redox reaction to proton translocation, and thus conserves the redox energy in a proton gradient. Cyanobacterial NDH-1 also plays a role in inorganic carbon-concentration.</text>
</comment>
<comment type="catalytic activity">
    <reaction evidence="1">
        <text>a plastoquinone + NADH + (n+1) H(+)(in) = a plastoquinol + NAD(+) + n H(+)(out)</text>
        <dbReference type="Rhea" id="RHEA:42608"/>
        <dbReference type="Rhea" id="RHEA-COMP:9561"/>
        <dbReference type="Rhea" id="RHEA-COMP:9562"/>
        <dbReference type="ChEBI" id="CHEBI:15378"/>
        <dbReference type="ChEBI" id="CHEBI:17757"/>
        <dbReference type="ChEBI" id="CHEBI:57540"/>
        <dbReference type="ChEBI" id="CHEBI:57945"/>
        <dbReference type="ChEBI" id="CHEBI:62192"/>
    </reaction>
</comment>
<comment type="catalytic activity">
    <reaction evidence="1">
        <text>a plastoquinone + NADPH + (n+1) H(+)(in) = a plastoquinol + NADP(+) + n H(+)(out)</text>
        <dbReference type="Rhea" id="RHEA:42612"/>
        <dbReference type="Rhea" id="RHEA-COMP:9561"/>
        <dbReference type="Rhea" id="RHEA-COMP:9562"/>
        <dbReference type="ChEBI" id="CHEBI:15378"/>
        <dbReference type="ChEBI" id="CHEBI:17757"/>
        <dbReference type="ChEBI" id="CHEBI:57783"/>
        <dbReference type="ChEBI" id="CHEBI:58349"/>
        <dbReference type="ChEBI" id="CHEBI:62192"/>
    </reaction>
</comment>
<comment type="subunit">
    <text evidence="1">NDH-1 can be composed of about 15 different subunits; different subcomplexes with different compositions have been identified which probably have different functions.</text>
</comment>
<comment type="subcellular location">
    <subcellularLocation>
        <location evidence="1">Cellular thylakoid membrane</location>
        <topology evidence="1">Peripheral membrane protein</topology>
        <orientation evidence="1">Cytoplasmic side</orientation>
    </subcellularLocation>
</comment>
<comment type="similarity">
    <text evidence="1">Belongs to the complex I 30 kDa subunit family.</text>
</comment>
<name>NDHJ_PROM3</name>
<evidence type="ECO:0000255" key="1">
    <source>
        <dbReference type="HAMAP-Rule" id="MF_01357"/>
    </source>
</evidence>
<sequence>MSETPSTPTVPAGPEPGPISRWLNKQGFEHQLLDPDHLGVEVIGVESMFLQVIVAALKADGFDYLQCQGGYDEGPGQQLVCFYHLVAMAEMVAKMGVGDSSSEAAKVREVRLKVFLSREDTPSLPSIYGLFRGADWQERETFDMFGINFEGHPHPKRLLMPEDWKGWPLRKDYVQPDFYEMQDAY</sequence>
<feature type="chain" id="PRO_0000358167" description="NAD(P)H-quinone oxidoreductase subunit J">
    <location>
        <begin position="1"/>
        <end position="185"/>
    </location>
</feature>
<gene>
    <name evidence="1" type="primary">ndhJ</name>
    <name type="ordered locus">P9303_25241</name>
</gene>
<dbReference type="EC" id="7.1.1.-" evidence="1"/>
<dbReference type="EMBL" id="CP000554">
    <property type="protein sequence ID" value="ABM79255.1"/>
    <property type="molecule type" value="Genomic_DNA"/>
</dbReference>
<dbReference type="RefSeq" id="WP_011827101.1">
    <property type="nucleotide sequence ID" value="NC_008820.1"/>
</dbReference>
<dbReference type="SMR" id="A2CCP5"/>
<dbReference type="STRING" id="59922.P9303_25241"/>
<dbReference type="KEGG" id="pmf:P9303_25241"/>
<dbReference type="HOGENOM" id="CLU_042628_9_1_3"/>
<dbReference type="BioCyc" id="PMAR59922:G1G80-2215-MONOMER"/>
<dbReference type="Proteomes" id="UP000002274">
    <property type="component" value="Chromosome"/>
</dbReference>
<dbReference type="GO" id="GO:0031676">
    <property type="term" value="C:plasma membrane-derived thylakoid membrane"/>
    <property type="evidence" value="ECO:0007669"/>
    <property type="project" value="UniProtKB-SubCell"/>
</dbReference>
<dbReference type="GO" id="GO:0008137">
    <property type="term" value="F:NADH dehydrogenase (ubiquinone) activity"/>
    <property type="evidence" value="ECO:0007669"/>
    <property type="project" value="InterPro"/>
</dbReference>
<dbReference type="GO" id="GO:0048038">
    <property type="term" value="F:quinone binding"/>
    <property type="evidence" value="ECO:0007669"/>
    <property type="project" value="UniProtKB-KW"/>
</dbReference>
<dbReference type="GO" id="GO:0019684">
    <property type="term" value="P:photosynthesis, light reaction"/>
    <property type="evidence" value="ECO:0007669"/>
    <property type="project" value="UniProtKB-UniRule"/>
</dbReference>
<dbReference type="Gene3D" id="3.30.460.80">
    <property type="entry name" value="NADH:ubiquinone oxidoreductase, 30kDa subunit"/>
    <property type="match status" value="1"/>
</dbReference>
<dbReference type="HAMAP" id="MF_01357">
    <property type="entry name" value="NDH1_NuoC"/>
    <property type="match status" value="1"/>
</dbReference>
<dbReference type="InterPro" id="IPR010218">
    <property type="entry name" value="NADH_DH_suC"/>
</dbReference>
<dbReference type="InterPro" id="IPR037232">
    <property type="entry name" value="NADH_quin_OxRdtase_su_C/D-like"/>
</dbReference>
<dbReference type="InterPro" id="IPR001268">
    <property type="entry name" value="NADH_UbQ_OxRdtase_30kDa_su"/>
</dbReference>
<dbReference type="InterPro" id="IPR020396">
    <property type="entry name" value="NADH_UbQ_OxRdtase_CS"/>
</dbReference>
<dbReference type="NCBIfam" id="NF009141">
    <property type="entry name" value="PRK12494.1"/>
    <property type="match status" value="1"/>
</dbReference>
<dbReference type="PANTHER" id="PTHR10884:SF14">
    <property type="entry name" value="NADH DEHYDROGENASE [UBIQUINONE] IRON-SULFUR PROTEIN 3, MITOCHONDRIAL"/>
    <property type="match status" value="1"/>
</dbReference>
<dbReference type="PANTHER" id="PTHR10884">
    <property type="entry name" value="NADH DEHYDROGENASE UBIQUINONE IRON-SULFUR PROTEIN 3"/>
    <property type="match status" value="1"/>
</dbReference>
<dbReference type="Pfam" id="PF00329">
    <property type="entry name" value="Complex1_30kDa"/>
    <property type="match status" value="1"/>
</dbReference>
<dbReference type="SUPFAM" id="SSF143243">
    <property type="entry name" value="Nqo5-like"/>
    <property type="match status" value="1"/>
</dbReference>
<dbReference type="PROSITE" id="PS00542">
    <property type="entry name" value="COMPLEX1_30K"/>
    <property type="match status" value="1"/>
</dbReference>
<reference key="1">
    <citation type="journal article" date="2007" name="PLoS Genet.">
        <title>Patterns and implications of gene gain and loss in the evolution of Prochlorococcus.</title>
        <authorList>
            <person name="Kettler G.C."/>
            <person name="Martiny A.C."/>
            <person name="Huang K."/>
            <person name="Zucker J."/>
            <person name="Coleman M.L."/>
            <person name="Rodrigue S."/>
            <person name="Chen F."/>
            <person name="Lapidus A."/>
            <person name="Ferriera S."/>
            <person name="Johnson J."/>
            <person name="Steglich C."/>
            <person name="Church G.M."/>
            <person name="Richardson P."/>
            <person name="Chisholm S.W."/>
        </authorList>
    </citation>
    <scope>NUCLEOTIDE SEQUENCE [LARGE SCALE GENOMIC DNA]</scope>
    <source>
        <strain>MIT 9303</strain>
    </source>
</reference>
<protein>
    <recommendedName>
        <fullName evidence="1">NAD(P)H-quinone oxidoreductase subunit J</fullName>
        <ecNumber evidence="1">7.1.1.-</ecNumber>
    </recommendedName>
    <alternativeName>
        <fullName>NAD(P)H dehydrogenase subunit J</fullName>
    </alternativeName>
    <alternativeName>
        <fullName evidence="1">NADH-plastoquinone oxidoreductase subunit J</fullName>
    </alternativeName>
    <alternativeName>
        <fullName evidence="1">NDH-1 subunit J</fullName>
        <shortName evidence="1">NDH-J</shortName>
    </alternativeName>
</protein>
<accession>A2CCP5</accession>
<keyword id="KW-0472">Membrane</keyword>
<keyword id="KW-0520">NAD</keyword>
<keyword id="KW-0521">NADP</keyword>
<keyword id="KW-0618">Plastoquinone</keyword>
<keyword id="KW-0874">Quinone</keyword>
<keyword id="KW-0793">Thylakoid</keyword>
<keyword id="KW-1278">Translocase</keyword>
<keyword id="KW-0813">Transport</keyword>
<organism>
    <name type="scientific">Prochlorococcus marinus (strain MIT 9303)</name>
    <dbReference type="NCBI Taxonomy" id="59922"/>
    <lineage>
        <taxon>Bacteria</taxon>
        <taxon>Bacillati</taxon>
        <taxon>Cyanobacteriota</taxon>
        <taxon>Cyanophyceae</taxon>
        <taxon>Synechococcales</taxon>
        <taxon>Prochlorococcaceae</taxon>
        <taxon>Prochlorococcus</taxon>
    </lineage>
</organism>